<comment type="function">
    <text evidence="4">Component of the ribosome, a large ribonucleoprotein complex responsible for the synthesis of proteins in the cell. The small ribosomal subunit (SSU) binds messenger RNAs (mRNAs) and translates the encoded message by selecting cognate aminoacyl-transfer RNA (tRNA) molecules. The large subunit (LSU) contains the ribosomal catalytic site termed the peptidyl transferase center (PTC), which catalyzes the formation of peptide bonds, thereby polymerizing the amino acids delivered by tRNAs into a polypeptide chain. The nascent polypeptides leave the ribosome through a tunnel in the LSU and interact with protein factors that function in enzymatic processing, targeting, and the membrane insertion of nascent chains at the exit of the ribosomal tunnel.</text>
</comment>
<comment type="subunit">
    <text evidence="1">Component of the small ribosomal subunit (PubMed:35613268). Mature ribosomes consist of a small (40S) and a large (60S) subunit (PubMed:35613268). The 40S subunit contains about 32 different proteins and 1 molecule of RNA (18S) (PubMed:35613268). The 60S subunit contains 45 different proteins and 3 molecules of RNA (25S, 5.8S and 5S) (PubMed:35613268).</text>
</comment>
<comment type="subcellular location">
    <subcellularLocation>
        <location evidence="4">Cytoplasm</location>
    </subcellularLocation>
</comment>
<comment type="similarity">
    <text evidence="3">Belongs to the universal ribosomal protein uS10 family.</text>
</comment>
<name>RS20_CANAL</name>
<proteinExistence type="evidence at protein level"/>
<sequence>MSAPINKEKVEQEAEQQIHKIRITLTSTKVKQLENVSANIIRNAAQYNIVKKGPVRMPTKVLKITTRKTPNGEGSKTWDAYEMRIHKRVIDLQAPASTVKRITQITIEPGVDVEVTIAA</sequence>
<keyword id="KW-0002">3D-structure</keyword>
<keyword id="KW-0963">Cytoplasm</keyword>
<keyword id="KW-1185">Reference proteome</keyword>
<keyword id="KW-0687">Ribonucleoprotein</keyword>
<keyword id="KW-0689">Ribosomal protein</keyword>
<evidence type="ECO:0000269" key="1">
    <source>
    </source>
</evidence>
<evidence type="ECO:0000303" key="2">
    <source>
    </source>
</evidence>
<evidence type="ECO:0000305" key="3"/>
<evidence type="ECO:0000305" key="4">
    <source>
    </source>
</evidence>
<evidence type="ECO:0007744" key="5">
    <source>
        <dbReference type="PDB" id="7PZY"/>
    </source>
</evidence>
<evidence type="ECO:0007744" key="6">
    <source>
        <dbReference type="PDB" id="7Q0F"/>
    </source>
</evidence>
<evidence type="ECO:0007744" key="7">
    <source>
        <dbReference type="PDB" id="7Q0P"/>
    </source>
</evidence>
<protein>
    <recommendedName>
        <fullName evidence="2">Small ribosomal subunit protein uS10</fullName>
    </recommendedName>
    <alternativeName>
        <fullName>40S ribosomal protein S20</fullName>
    </alternativeName>
</protein>
<gene>
    <name type="primary">RPS20</name>
    <name type="ordered locus">CAALFM_CR08150WA</name>
    <name type="ordered locus">orf19.6375</name>
</gene>
<dbReference type="EMBL" id="CP017630">
    <property type="protein sequence ID" value="AOW31499.1"/>
    <property type="molecule type" value="Genomic_DNA"/>
</dbReference>
<dbReference type="RefSeq" id="XP_716215.1">
    <property type="nucleotide sequence ID" value="XM_711122.1"/>
</dbReference>
<dbReference type="PDB" id="7PZY">
    <property type="method" value="EM"/>
    <property type="resolution" value="2.32 A"/>
    <property type="chains" value="V=1-119"/>
</dbReference>
<dbReference type="PDB" id="7Q08">
    <property type="method" value="EM"/>
    <property type="resolution" value="2.56 A"/>
    <property type="chains" value="V=1-119"/>
</dbReference>
<dbReference type="PDB" id="7Q0F">
    <property type="method" value="EM"/>
    <property type="resolution" value="2.64 A"/>
    <property type="chains" value="V=1-119"/>
</dbReference>
<dbReference type="PDB" id="7Q0P">
    <property type="method" value="EM"/>
    <property type="resolution" value="2.77 A"/>
    <property type="chains" value="V=1-119"/>
</dbReference>
<dbReference type="PDB" id="7Q0R">
    <property type="method" value="EM"/>
    <property type="resolution" value="2.67 A"/>
    <property type="chains" value="V=1-119"/>
</dbReference>
<dbReference type="PDB" id="8C3A">
    <property type="method" value="X-ray"/>
    <property type="resolution" value="3.00 A"/>
    <property type="chains" value="DH/W=1-119"/>
</dbReference>
<dbReference type="PDB" id="8OGJ">
    <property type="method" value="EM"/>
    <property type="resolution" value="3.10 A"/>
    <property type="chains" value="V=1-119"/>
</dbReference>
<dbReference type="PDB" id="8OH6">
    <property type="method" value="X-ray"/>
    <property type="resolution" value="3.35 A"/>
    <property type="chains" value="DH/W=1-119"/>
</dbReference>
<dbReference type="PDB" id="8OI5">
    <property type="method" value="X-ray"/>
    <property type="resolution" value="2.90 A"/>
    <property type="chains" value="DH/W=1-119"/>
</dbReference>
<dbReference type="PDB" id="8OJ3">
    <property type="method" value="X-ray"/>
    <property type="resolution" value="3.50 A"/>
    <property type="chains" value="DH/W=1-119"/>
</dbReference>
<dbReference type="PDBsum" id="7PZY"/>
<dbReference type="PDBsum" id="7Q08"/>
<dbReference type="PDBsum" id="7Q0F"/>
<dbReference type="PDBsum" id="7Q0P"/>
<dbReference type="PDBsum" id="7Q0R"/>
<dbReference type="PDBsum" id="8C3A"/>
<dbReference type="PDBsum" id="8OGJ"/>
<dbReference type="PDBsum" id="8OH6"/>
<dbReference type="PDBsum" id="8OI5"/>
<dbReference type="PDBsum" id="8OJ3"/>
<dbReference type="EMDB" id="EMD-13737"/>
<dbReference type="EMDB" id="EMD-13741"/>
<dbReference type="EMDB" id="EMD-13744"/>
<dbReference type="EMDB" id="EMD-13749"/>
<dbReference type="EMDB" id="EMD-13750"/>
<dbReference type="SMR" id="Q5A389"/>
<dbReference type="FunCoup" id="Q5A389">
    <property type="interactions" value="889"/>
</dbReference>
<dbReference type="STRING" id="237561.Q5A389"/>
<dbReference type="EnsemblFungi" id="CR_08150W_A-T">
    <property type="protein sequence ID" value="CR_08150W_A-T-p1"/>
    <property type="gene ID" value="CR_08150W_A"/>
</dbReference>
<dbReference type="GeneID" id="3642071"/>
<dbReference type="KEGG" id="cal:CAALFM_CR08150WA"/>
<dbReference type="CGD" id="CAL0000185871">
    <property type="gene designation" value="RPS20"/>
</dbReference>
<dbReference type="VEuPathDB" id="FungiDB:CR_08150W_A"/>
<dbReference type="eggNOG" id="KOG0900">
    <property type="taxonomic scope" value="Eukaryota"/>
</dbReference>
<dbReference type="HOGENOM" id="CLU_122625_0_0_1"/>
<dbReference type="InParanoid" id="Q5A389"/>
<dbReference type="OMA" id="IHKRVIH"/>
<dbReference type="OrthoDB" id="10248551at2759"/>
<dbReference type="Proteomes" id="UP000000559">
    <property type="component" value="Chromosome R"/>
</dbReference>
<dbReference type="GO" id="GO:0022627">
    <property type="term" value="C:cytosolic small ribosomal subunit"/>
    <property type="evidence" value="ECO:0000318"/>
    <property type="project" value="GO_Central"/>
</dbReference>
<dbReference type="GO" id="GO:0030446">
    <property type="term" value="C:hyphal cell wall"/>
    <property type="evidence" value="ECO:0000314"/>
    <property type="project" value="CGD"/>
</dbReference>
<dbReference type="GO" id="GO:0030445">
    <property type="term" value="C:yeast-form cell wall"/>
    <property type="evidence" value="ECO:0000314"/>
    <property type="project" value="CGD"/>
</dbReference>
<dbReference type="GO" id="GO:0003723">
    <property type="term" value="F:RNA binding"/>
    <property type="evidence" value="ECO:0007669"/>
    <property type="project" value="InterPro"/>
</dbReference>
<dbReference type="GO" id="GO:0003735">
    <property type="term" value="F:structural constituent of ribosome"/>
    <property type="evidence" value="ECO:0000318"/>
    <property type="project" value="GO_Central"/>
</dbReference>
<dbReference type="GO" id="GO:0006412">
    <property type="term" value="P:translation"/>
    <property type="evidence" value="ECO:0007669"/>
    <property type="project" value="InterPro"/>
</dbReference>
<dbReference type="FunFam" id="3.30.70.600:FF:000004">
    <property type="entry name" value="30S ribosomal protein S10"/>
    <property type="match status" value="1"/>
</dbReference>
<dbReference type="Gene3D" id="3.30.70.600">
    <property type="entry name" value="Ribosomal protein S10 domain"/>
    <property type="match status" value="1"/>
</dbReference>
<dbReference type="HAMAP" id="MF_00508">
    <property type="entry name" value="Ribosomal_uS10"/>
    <property type="match status" value="1"/>
</dbReference>
<dbReference type="InterPro" id="IPR001848">
    <property type="entry name" value="Ribosomal_uS10"/>
</dbReference>
<dbReference type="InterPro" id="IPR018268">
    <property type="entry name" value="Ribosomal_uS10_CS"/>
</dbReference>
<dbReference type="InterPro" id="IPR027486">
    <property type="entry name" value="Ribosomal_uS10_dom"/>
</dbReference>
<dbReference type="InterPro" id="IPR036838">
    <property type="entry name" value="Ribosomal_uS10_dom_sf"/>
</dbReference>
<dbReference type="InterPro" id="IPR005729">
    <property type="entry name" value="Ribosomal_uS10_euk/arc"/>
</dbReference>
<dbReference type="NCBIfam" id="TIGR01046">
    <property type="entry name" value="uS10_euk_arch"/>
    <property type="match status" value="1"/>
</dbReference>
<dbReference type="PANTHER" id="PTHR11700">
    <property type="entry name" value="30S RIBOSOMAL PROTEIN S10 FAMILY MEMBER"/>
    <property type="match status" value="1"/>
</dbReference>
<dbReference type="Pfam" id="PF00338">
    <property type="entry name" value="Ribosomal_S10"/>
    <property type="match status" value="1"/>
</dbReference>
<dbReference type="PRINTS" id="PR00971">
    <property type="entry name" value="RIBOSOMALS10"/>
</dbReference>
<dbReference type="SMART" id="SM01403">
    <property type="entry name" value="Ribosomal_S10"/>
    <property type="match status" value="1"/>
</dbReference>
<dbReference type="SUPFAM" id="SSF54999">
    <property type="entry name" value="Ribosomal protein S10"/>
    <property type="match status" value="1"/>
</dbReference>
<dbReference type="PROSITE" id="PS00361">
    <property type="entry name" value="RIBOSOMAL_S10"/>
    <property type="match status" value="1"/>
</dbReference>
<reference key="1">
    <citation type="journal article" date="2004" name="Proc. Natl. Acad. Sci. U.S.A.">
        <title>The diploid genome sequence of Candida albicans.</title>
        <authorList>
            <person name="Jones T."/>
            <person name="Federspiel N.A."/>
            <person name="Chibana H."/>
            <person name="Dungan J."/>
            <person name="Kalman S."/>
            <person name="Magee B.B."/>
            <person name="Newport G."/>
            <person name="Thorstenson Y.R."/>
            <person name="Agabian N."/>
            <person name="Magee P.T."/>
            <person name="Davis R.W."/>
            <person name="Scherer S."/>
        </authorList>
    </citation>
    <scope>NUCLEOTIDE SEQUENCE [LARGE SCALE GENOMIC DNA]</scope>
    <source>
        <strain>SC5314 / ATCC MYA-2876</strain>
    </source>
</reference>
<reference key="2">
    <citation type="journal article" date="2007" name="Genome Biol.">
        <title>Assembly of the Candida albicans genome into sixteen supercontigs aligned on the eight chromosomes.</title>
        <authorList>
            <person name="van het Hoog M."/>
            <person name="Rast T.J."/>
            <person name="Martchenko M."/>
            <person name="Grindle S."/>
            <person name="Dignard D."/>
            <person name="Hogues H."/>
            <person name="Cuomo C."/>
            <person name="Berriman M."/>
            <person name="Scherer S."/>
            <person name="Magee B.B."/>
            <person name="Whiteway M."/>
            <person name="Chibana H."/>
            <person name="Nantel A."/>
            <person name="Magee P.T."/>
        </authorList>
    </citation>
    <scope>GENOME REANNOTATION</scope>
    <source>
        <strain>SC5314 / ATCC MYA-2876</strain>
    </source>
</reference>
<reference key="3">
    <citation type="journal article" date="2013" name="Genome Biol.">
        <title>Assembly of a phased diploid Candida albicans genome facilitates allele-specific measurements and provides a simple model for repeat and indel structure.</title>
        <authorList>
            <person name="Muzzey D."/>
            <person name="Schwartz K."/>
            <person name="Weissman J.S."/>
            <person name="Sherlock G."/>
        </authorList>
    </citation>
    <scope>NUCLEOTIDE SEQUENCE [LARGE SCALE GENOMIC DNA]</scope>
    <scope>GENOME REANNOTATION</scope>
    <source>
        <strain>SC5314 / ATCC MYA-2876</strain>
    </source>
</reference>
<reference evidence="5 6 7" key="4">
    <citation type="journal article" date="2022" name="Sci. Adv.">
        <title>E-site drug specificity of the human pathogen Candida albicans ribosome.</title>
        <authorList>
            <person name="Zgadzay Y."/>
            <person name="Kolosova O."/>
            <person name="Stetsenko A."/>
            <person name="Wu C."/>
            <person name="Bruchlen D."/>
            <person name="Usachev K."/>
            <person name="Validov S."/>
            <person name="Jenner L."/>
            <person name="Rogachev A."/>
            <person name="Yusupova G."/>
            <person name="Sachs M.S."/>
            <person name="Guskov A."/>
            <person name="Yusupov M."/>
        </authorList>
    </citation>
    <scope>STRUCTURE BY ELECTRON MICROSCOPY (2.32 ANGSTROMS) OF THE 80S RIBOSOME</scope>
    <scope>SUBUNIT</scope>
</reference>
<organism>
    <name type="scientific">Candida albicans (strain SC5314 / ATCC MYA-2876)</name>
    <name type="common">Yeast</name>
    <dbReference type="NCBI Taxonomy" id="237561"/>
    <lineage>
        <taxon>Eukaryota</taxon>
        <taxon>Fungi</taxon>
        <taxon>Dikarya</taxon>
        <taxon>Ascomycota</taxon>
        <taxon>Saccharomycotina</taxon>
        <taxon>Pichiomycetes</taxon>
        <taxon>Debaryomycetaceae</taxon>
        <taxon>Candida/Lodderomyces clade</taxon>
        <taxon>Candida</taxon>
    </lineage>
</organism>
<feature type="chain" id="PRO_0000456558" description="Small ribosomal subunit protein uS10">
    <location>
        <begin position="1"/>
        <end position="119"/>
    </location>
</feature>
<accession>Q5A389</accession>